<feature type="chain" id="PRO_0000451387" description="Sesquiterpene synthase 2">
    <location>
        <begin position="1"/>
        <end position="338"/>
    </location>
</feature>
<feature type="short sequence motif" description="DDXXD motif" evidence="6">
    <location>
        <begin position="93"/>
        <end position="97"/>
    </location>
</feature>
<feature type="short sequence motif" description="NSE/DTE motif" evidence="6">
    <location>
        <begin position="228"/>
        <end position="236"/>
    </location>
</feature>
<feature type="binding site" evidence="2">
    <location>
        <position position="93"/>
    </location>
    <ligand>
        <name>Mg(2+)</name>
        <dbReference type="ChEBI" id="CHEBI:18420"/>
        <label>1</label>
    </ligand>
</feature>
<feature type="binding site" evidence="2">
    <location>
        <position position="93"/>
    </location>
    <ligand>
        <name>Mg(2+)</name>
        <dbReference type="ChEBI" id="CHEBI:18420"/>
        <label>2</label>
    </ligand>
</feature>
<feature type="binding site" evidence="2">
    <location>
        <position position="228"/>
    </location>
    <ligand>
        <name>Mg(2+)</name>
        <dbReference type="ChEBI" id="CHEBI:18420"/>
        <label>3</label>
    </ligand>
</feature>
<feature type="binding site" evidence="2">
    <location>
        <position position="232"/>
    </location>
    <ligand>
        <name>Mg(2+)</name>
        <dbReference type="ChEBI" id="CHEBI:18420"/>
        <label>3</label>
    </ligand>
</feature>
<feature type="binding site" evidence="2">
    <location>
        <position position="236"/>
    </location>
    <ligand>
        <name>Mg(2+)</name>
        <dbReference type="ChEBI" id="CHEBI:18420"/>
        <label>3</label>
    </ligand>
</feature>
<feature type="binding site" evidence="2">
    <location>
        <position position="316"/>
    </location>
    <ligand>
        <name>(2E,6E)-farnesyl diphosphate</name>
        <dbReference type="ChEBI" id="CHEBI:175763"/>
    </ligand>
</feature>
<feature type="binding site" evidence="2">
    <location>
        <position position="317"/>
    </location>
    <ligand>
        <name>(2E,6E)-farnesyl diphosphate</name>
        <dbReference type="ChEBI" id="CHEBI:175763"/>
    </ligand>
</feature>
<feature type="site" description="Plays a critical role in the stabilization of intermediate cation" evidence="1">
    <location>
        <position position="90"/>
    </location>
</feature>
<reference key="1">
    <citation type="journal article" date="2018" name="Microb. Biotechnol.">
        <title>Insight into metabolic diversity of the brown-rot basidiomycete Postia placenta responsible for sesquiterpene biosynthesis: semi-comprehensive screening of cytochrome P450 monooxygenase involved in protoilludene metabolism.</title>
        <authorList>
            <person name="Ichinose H."/>
            <person name="Kitaoka T."/>
        </authorList>
    </citation>
    <scope>NUCLEOTIDE SEQUENCE [MRNA]</scope>
    <scope>FUNCTION</scope>
    <scope>DOMAIN</scope>
    <scope>CATALYTIC ACTIVITY</scope>
    <source>
        <strain>ATCC 44394 / Madison 698-R</strain>
    </source>
</reference>
<sequence>MSSSVSSTSAPTKIVIPDLVSHCTIPVRCNRHWKQASVESKRWLFRGGNLSDRKRDAFHGLKAGYLTSMCYPLAGYPQLRVSCDFMNYLFHLDNISDEMNDRGTHGTAVSVLDALYQPHMHPTSRVGKMTKDYWVRLIQTASPGAQQRFIETFDMFFQAVTQQAMDRANGVIPDLESYIAIRRDTSGCKPCWALIEYANNLDLPWEIMDHPIIRGLGEAANDLVTWSNDIFSYNVEQSKGDTHNMIVVVQNQQGLDLQSAVNFVGDLCKQSIDRFHYLRENLPSWGPELDREVEIYVDGLADWITGSLKWSFESERYFGKAGLEVKKTRVVALLPRRA</sequence>
<dbReference type="EC" id="4.2.3.-" evidence="3"/>
<dbReference type="EC" id="4.2.3.125" evidence="3"/>
<dbReference type="EC" id="4.2.3.126" evidence="3"/>
<dbReference type="EC" id="4.2.3.127" evidence="3"/>
<dbReference type="EC" id="4.2.3.133" evidence="3"/>
<dbReference type="EMBL" id="LC378426">
    <property type="protein sequence ID" value="BBD74518.1"/>
    <property type="molecule type" value="mRNA"/>
</dbReference>
<dbReference type="SMR" id="A0A348B780"/>
<dbReference type="GO" id="GO:0102877">
    <property type="term" value="F:alpha-copaene synthase activity"/>
    <property type="evidence" value="ECO:0007669"/>
    <property type="project" value="UniProtKB-EC"/>
</dbReference>
<dbReference type="GO" id="GO:0046872">
    <property type="term" value="F:metal ion binding"/>
    <property type="evidence" value="ECO:0007669"/>
    <property type="project" value="UniProtKB-KW"/>
</dbReference>
<dbReference type="GO" id="GO:0010333">
    <property type="term" value="F:terpene synthase activity"/>
    <property type="evidence" value="ECO:0007669"/>
    <property type="project" value="InterPro"/>
</dbReference>
<dbReference type="GO" id="GO:0008299">
    <property type="term" value="P:isoprenoid biosynthetic process"/>
    <property type="evidence" value="ECO:0007669"/>
    <property type="project" value="UniProtKB-ARBA"/>
</dbReference>
<dbReference type="Gene3D" id="1.10.600.10">
    <property type="entry name" value="Farnesyl Diphosphate Synthase"/>
    <property type="match status" value="1"/>
</dbReference>
<dbReference type="InterPro" id="IPR008949">
    <property type="entry name" value="Isoprenoid_synthase_dom_sf"/>
</dbReference>
<dbReference type="InterPro" id="IPR034686">
    <property type="entry name" value="Terpene_cyclase-like_2"/>
</dbReference>
<dbReference type="PANTHER" id="PTHR35201:SF4">
    <property type="entry name" value="BETA-PINACENE SYNTHASE-RELATED"/>
    <property type="match status" value="1"/>
</dbReference>
<dbReference type="PANTHER" id="PTHR35201">
    <property type="entry name" value="TERPENE SYNTHASE"/>
    <property type="match status" value="1"/>
</dbReference>
<dbReference type="Pfam" id="PF19086">
    <property type="entry name" value="Terpene_syn_C_2"/>
    <property type="match status" value="1"/>
</dbReference>
<dbReference type="SFLD" id="SFLDS00005">
    <property type="entry name" value="Isoprenoid_Synthase_Type_I"/>
    <property type="match status" value="1"/>
</dbReference>
<dbReference type="SFLD" id="SFLDG01020">
    <property type="entry name" value="Terpene_Cyclase_Like_2"/>
    <property type="match status" value="1"/>
</dbReference>
<dbReference type="SUPFAM" id="SSF48576">
    <property type="entry name" value="Terpenoid synthases"/>
    <property type="match status" value="1"/>
</dbReference>
<evidence type="ECO:0000250" key="1">
    <source>
        <dbReference type="UniProtKB" id="B5HDJ6"/>
    </source>
</evidence>
<evidence type="ECO:0000250" key="2">
    <source>
        <dbReference type="UniProtKB" id="Q9UR08"/>
    </source>
</evidence>
<evidence type="ECO:0000269" key="3">
    <source>
    </source>
</evidence>
<evidence type="ECO:0000303" key="4">
    <source>
    </source>
</evidence>
<evidence type="ECO:0000305" key="5"/>
<evidence type="ECO:0000305" key="6">
    <source>
    </source>
</evidence>
<keyword id="KW-0456">Lyase</keyword>
<keyword id="KW-0460">Magnesium</keyword>
<keyword id="KW-0479">Metal-binding</keyword>
<comment type="function">
    <text evidence="3">Terpene cyclase that catalyzes the cyclization of farnesyl diphosphate (FPP) to various sesquiterpenes, including alpha-copaene, beta-copaene, beta-elemene, alpha-muurolene, gamma-muurolene and delta-cadinene.</text>
</comment>
<comment type="catalytic activity">
    <reaction evidence="3">
        <text>(2E,6E)-farnesyl diphosphate = alpha-copaene + diphosphate</text>
        <dbReference type="Rhea" id="RHEA:33991"/>
        <dbReference type="ChEBI" id="CHEBI:10221"/>
        <dbReference type="ChEBI" id="CHEBI:33019"/>
        <dbReference type="ChEBI" id="CHEBI:175763"/>
        <dbReference type="EC" id="4.2.3.133"/>
    </reaction>
    <physiologicalReaction direction="left-to-right" evidence="3">
        <dbReference type="Rhea" id="RHEA:33992"/>
    </physiologicalReaction>
</comment>
<comment type="catalytic activity">
    <reaction evidence="3">
        <text>(2E,6E)-farnesyl diphosphate = beta-copaene + diphosphate</text>
        <dbReference type="Rhea" id="RHEA:33111"/>
        <dbReference type="ChEBI" id="CHEBI:33019"/>
        <dbReference type="ChEBI" id="CHEBI:64799"/>
        <dbReference type="ChEBI" id="CHEBI:175763"/>
        <dbReference type="EC" id="4.2.3.127"/>
    </reaction>
    <physiologicalReaction direction="left-to-right" evidence="3">
        <dbReference type="Rhea" id="RHEA:33112"/>
    </physiologicalReaction>
</comment>
<comment type="catalytic activity">
    <reaction evidence="3">
        <text>(2E,6E)-farnesyl diphosphate = alpha-muurolene + diphosphate</text>
        <dbReference type="Rhea" id="RHEA:33103"/>
        <dbReference type="ChEBI" id="CHEBI:33019"/>
        <dbReference type="ChEBI" id="CHEBI:64797"/>
        <dbReference type="ChEBI" id="CHEBI:175763"/>
        <dbReference type="EC" id="4.2.3.125"/>
    </reaction>
    <physiologicalReaction direction="left-to-right" evidence="3">
        <dbReference type="Rhea" id="RHEA:33104"/>
    </physiologicalReaction>
</comment>
<comment type="catalytic activity">
    <reaction evidence="3">
        <text>(2E,6E)-farnesyl diphosphate = gamma-muurolene + diphosphate</text>
        <dbReference type="Rhea" id="RHEA:33107"/>
        <dbReference type="ChEBI" id="CHEBI:33019"/>
        <dbReference type="ChEBI" id="CHEBI:64798"/>
        <dbReference type="ChEBI" id="CHEBI:175763"/>
        <dbReference type="EC" id="4.2.3.126"/>
    </reaction>
    <physiologicalReaction direction="left-to-right" evidence="3">
        <dbReference type="Rhea" id="RHEA:33108"/>
    </physiologicalReaction>
</comment>
<comment type="catalytic activity">
    <reaction evidence="3">
        <text>(2E,6E)-farnesyl diphosphate = delta-cadinene + diphosphate</text>
        <dbReference type="Rhea" id="RHEA:56556"/>
        <dbReference type="ChEBI" id="CHEBI:33019"/>
        <dbReference type="ChEBI" id="CHEBI:140564"/>
        <dbReference type="ChEBI" id="CHEBI:175763"/>
    </reaction>
    <physiologicalReaction direction="left-to-right" evidence="3">
        <dbReference type="Rhea" id="RHEA:56557"/>
    </physiologicalReaction>
</comment>
<comment type="cofactor">
    <cofactor evidence="3">
        <name>Mg(2+)</name>
        <dbReference type="ChEBI" id="CHEBI:18420"/>
    </cofactor>
</comment>
<comment type="domain">
    <text evidence="6">The conserved DDXXD and NSE/DTE motifs are important for the catalytic activity, presumably through binding to Mg(2+).</text>
</comment>
<comment type="similarity">
    <text evidence="5">Belongs to the terpene synthase family.</text>
</comment>
<protein>
    <recommendedName>
        <fullName evidence="4">Sesquiterpene synthase 2</fullName>
        <ecNumber evidence="3">4.2.3.-</ecNumber>
        <ecNumber evidence="3">4.2.3.125</ecNumber>
        <ecNumber evidence="3">4.2.3.126</ecNumber>
        <ecNumber evidence="3">4.2.3.127</ecNumber>
        <ecNumber evidence="3">4.2.3.133</ecNumber>
    </recommendedName>
    <alternativeName>
        <fullName evidence="4">Terpene cyclase 2</fullName>
    </alternativeName>
</protein>
<organism>
    <name type="scientific">Postia placenta (strain ATCC 44394 / Madison 698-R)</name>
    <name type="common">Brown rot fungus</name>
    <name type="synonym">Poria monticola</name>
    <dbReference type="NCBI Taxonomy" id="561896"/>
    <lineage>
        <taxon>Eukaryota</taxon>
        <taxon>Fungi</taxon>
        <taxon>Dikarya</taxon>
        <taxon>Basidiomycota</taxon>
        <taxon>Agaricomycotina</taxon>
        <taxon>Agaricomycetes</taxon>
        <taxon>Polyporales</taxon>
        <taxon>Adustoporiaceae</taxon>
        <taxon>Rhodonia</taxon>
    </lineage>
</organism>
<gene>
    <name evidence="4" type="primary">STS-02</name>
</gene>
<name>STS2_POSPM</name>
<proteinExistence type="evidence at protein level"/>
<accession>A0A348B780</accession>